<gene>
    <name evidence="1" type="primary">miaB</name>
    <name type="ordered locus">Mext_3204</name>
</gene>
<sequence length="446" mass="48225">MKKAYVKSYGCQMNAYDAGRMADVLAAEGYSATDTVEEADVVVLNTCHIREKAAEKVYSELGRLRVLKGERAESGHDTRIVVAGCVAQAEGREILSRAPAVDVVVGPQSYHRLPDLLRQSRETRVVDTEFPAEDKFDHLPARRNRGVTGFLTVQEGCDKFCAFCVVPYTRGAEVSRSVAAVVDEARRLVEGGVREITLIGQNVNAYHGNGPDGAPATLGHLMDALSAVPGLLRLRYTTSHPNDFADDLIAAHATNPLVMPYLHLPVQSGSDRILHAMNRRHTGDAYRRLIERIRNARPDIALSSDFIVGFPGETDADFAETMRLVSDIGFSAAFSFKYSPRAGTPAAEREDAVPEAVKTERLAALQDLLDRQRHAYNAASVGTLTEILVEKTGRHPGQVAGKTPHLQAVQFDAPASTIGTVVPVRITRAGSNSLFGETLEGAAAAA</sequence>
<accession>A9VYZ9</accession>
<dbReference type="EC" id="2.8.4.3" evidence="1"/>
<dbReference type="EMBL" id="CP000908">
    <property type="protein sequence ID" value="ABY31591.1"/>
    <property type="molecule type" value="Genomic_DNA"/>
</dbReference>
<dbReference type="RefSeq" id="WP_012254485.1">
    <property type="nucleotide sequence ID" value="NC_010172.1"/>
</dbReference>
<dbReference type="SMR" id="A9VYZ9"/>
<dbReference type="KEGG" id="mex:Mext_3204"/>
<dbReference type="eggNOG" id="COG0621">
    <property type="taxonomic scope" value="Bacteria"/>
</dbReference>
<dbReference type="HOGENOM" id="CLU_018697_2_0_5"/>
<dbReference type="BioCyc" id="MEXT419610:MEXT_RS16105-MONOMER"/>
<dbReference type="GO" id="GO:0005829">
    <property type="term" value="C:cytosol"/>
    <property type="evidence" value="ECO:0007669"/>
    <property type="project" value="TreeGrafter"/>
</dbReference>
<dbReference type="GO" id="GO:0051539">
    <property type="term" value="F:4 iron, 4 sulfur cluster binding"/>
    <property type="evidence" value="ECO:0007669"/>
    <property type="project" value="UniProtKB-UniRule"/>
</dbReference>
<dbReference type="GO" id="GO:0046872">
    <property type="term" value="F:metal ion binding"/>
    <property type="evidence" value="ECO:0007669"/>
    <property type="project" value="UniProtKB-KW"/>
</dbReference>
<dbReference type="GO" id="GO:0035597">
    <property type="term" value="F:N6-isopentenyladenosine methylthiotransferase activity"/>
    <property type="evidence" value="ECO:0007669"/>
    <property type="project" value="TreeGrafter"/>
</dbReference>
<dbReference type="CDD" id="cd01335">
    <property type="entry name" value="Radical_SAM"/>
    <property type="match status" value="1"/>
</dbReference>
<dbReference type="FunFam" id="3.40.50.12160:FF:000003">
    <property type="entry name" value="CDK5 regulatory subunit-associated protein 1"/>
    <property type="match status" value="1"/>
</dbReference>
<dbReference type="FunFam" id="3.80.30.20:FF:000001">
    <property type="entry name" value="tRNA-2-methylthio-N(6)-dimethylallyladenosine synthase 2"/>
    <property type="match status" value="1"/>
</dbReference>
<dbReference type="Gene3D" id="3.40.50.12160">
    <property type="entry name" value="Methylthiotransferase, N-terminal domain"/>
    <property type="match status" value="1"/>
</dbReference>
<dbReference type="Gene3D" id="3.80.30.20">
    <property type="entry name" value="tm_1862 like domain"/>
    <property type="match status" value="1"/>
</dbReference>
<dbReference type="HAMAP" id="MF_01864">
    <property type="entry name" value="tRNA_metthiotr_MiaB"/>
    <property type="match status" value="1"/>
</dbReference>
<dbReference type="InterPro" id="IPR006638">
    <property type="entry name" value="Elp3/MiaA/NifB-like_rSAM"/>
</dbReference>
<dbReference type="InterPro" id="IPR005839">
    <property type="entry name" value="Methylthiotransferase"/>
</dbReference>
<dbReference type="InterPro" id="IPR020612">
    <property type="entry name" value="Methylthiotransferase_CS"/>
</dbReference>
<dbReference type="InterPro" id="IPR013848">
    <property type="entry name" value="Methylthiotransferase_N"/>
</dbReference>
<dbReference type="InterPro" id="IPR038135">
    <property type="entry name" value="Methylthiotransferase_N_sf"/>
</dbReference>
<dbReference type="InterPro" id="IPR006463">
    <property type="entry name" value="MiaB_methiolase"/>
</dbReference>
<dbReference type="InterPro" id="IPR007197">
    <property type="entry name" value="rSAM"/>
</dbReference>
<dbReference type="InterPro" id="IPR023404">
    <property type="entry name" value="rSAM_horseshoe"/>
</dbReference>
<dbReference type="InterPro" id="IPR002792">
    <property type="entry name" value="TRAM_dom"/>
</dbReference>
<dbReference type="NCBIfam" id="TIGR01574">
    <property type="entry name" value="miaB-methiolase"/>
    <property type="match status" value="1"/>
</dbReference>
<dbReference type="NCBIfam" id="TIGR00089">
    <property type="entry name" value="MiaB/RimO family radical SAM methylthiotransferase"/>
    <property type="match status" value="1"/>
</dbReference>
<dbReference type="PANTHER" id="PTHR43020">
    <property type="entry name" value="CDK5 REGULATORY SUBUNIT-ASSOCIATED PROTEIN 1"/>
    <property type="match status" value="1"/>
</dbReference>
<dbReference type="PANTHER" id="PTHR43020:SF2">
    <property type="entry name" value="MITOCHONDRIAL TRNA METHYLTHIOTRANSFERASE CDK5RAP1"/>
    <property type="match status" value="1"/>
</dbReference>
<dbReference type="Pfam" id="PF04055">
    <property type="entry name" value="Radical_SAM"/>
    <property type="match status" value="1"/>
</dbReference>
<dbReference type="Pfam" id="PF01938">
    <property type="entry name" value="TRAM"/>
    <property type="match status" value="1"/>
</dbReference>
<dbReference type="Pfam" id="PF00919">
    <property type="entry name" value="UPF0004"/>
    <property type="match status" value="1"/>
</dbReference>
<dbReference type="SFLD" id="SFLDF00273">
    <property type="entry name" value="(dimethylallyl)adenosine_tRNA"/>
    <property type="match status" value="1"/>
</dbReference>
<dbReference type="SFLD" id="SFLDG01082">
    <property type="entry name" value="B12-binding_domain_containing"/>
    <property type="match status" value="1"/>
</dbReference>
<dbReference type="SFLD" id="SFLDG01061">
    <property type="entry name" value="methylthiotransferase"/>
    <property type="match status" value="1"/>
</dbReference>
<dbReference type="SMART" id="SM00729">
    <property type="entry name" value="Elp3"/>
    <property type="match status" value="1"/>
</dbReference>
<dbReference type="SUPFAM" id="SSF102114">
    <property type="entry name" value="Radical SAM enzymes"/>
    <property type="match status" value="1"/>
</dbReference>
<dbReference type="PROSITE" id="PS51449">
    <property type="entry name" value="MTTASE_N"/>
    <property type="match status" value="1"/>
</dbReference>
<dbReference type="PROSITE" id="PS01278">
    <property type="entry name" value="MTTASE_RADICAL"/>
    <property type="match status" value="1"/>
</dbReference>
<dbReference type="PROSITE" id="PS51918">
    <property type="entry name" value="RADICAL_SAM"/>
    <property type="match status" value="1"/>
</dbReference>
<dbReference type="PROSITE" id="PS50926">
    <property type="entry name" value="TRAM"/>
    <property type="match status" value="1"/>
</dbReference>
<comment type="function">
    <text evidence="1">Catalyzes the methylthiolation of N6-(dimethylallyl)adenosine (i(6)A), leading to the formation of 2-methylthio-N6-(dimethylallyl)adenosine (ms(2)i(6)A) at position 37 in tRNAs that read codons beginning with uridine.</text>
</comment>
<comment type="catalytic activity">
    <reaction evidence="1">
        <text>N(6)-dimethylallyladenosine(37) in tRNA + (sulfur carrier)-SH + AH2 + 2 S-adenosyl-L-methionine = 2-methylsulfanyl-N(6)-dimethylallyladenosine(37) in tRNA + (sulfur carrier)-H + 5'-deoxyadenosine + L-methionine + A + S-adenosyl-L-homocysteine + 2 H(+)</text>
        <dbReference type="Rhea" id="RHEA:37067"/>
        <dbReference type="Rhea" id="RHEA-COMP:10375"/>
        <dbReference type="Rhea" id="RHEA-COMP:10376"/>
        <dbReference type="Rhea" id="RHEA-COMP:14737"/>
        <dbReference type="Rhea" id="RHEA-COMP:14739"/>
        <dbReference type="ChEBI" id="CHEBI:13193"/>
        <dbReference type="ChEBI" id="CHEBI:15378"/>
        <dbReference type="ChEBI" id="CHEBI:17319"/>
        <dbReference type="ChEBI" id="CHEBI:17499"/>
        <dbReference type="ChEBI" id="CHEBI:29917"/>
        <dbReference type="ChEBI" id="CHEBI:57844"/>
        <dbReference type="ChEBI" id="CHEBI:57856"/>
        <dbReference type="ChEBI" id="CHEBI:59789"/>
        <dbReference type="ChEBI" id="CHEBI:64428"/>
        <dbReference type="ChEBI" id="CHEBI:74415"/>
        <dbReference type="ChEBI" id="CHEBI:74417"/>
        <dbReference type="EC" id="2.8.4.3"/>
    </reaction>
</comment>
<comment type="cofactor">
    <cofactor evidence="1">
        <name>[4Fe-4S] cluster</name>
        <dbReference type="ChEBI" id="CHEBI:49883"/>
    </cofactor>
    <text evidence="1">Binds 2 [4Fe-4S] clusters. One cluster is coordinated with 3 cysteines and an exchangeable S-adenosyl-L-methionine.</text>
</comment>
<comment type="subunit">
    <text evidence="1">Monomer.</text>
</comment>
<comment type="subcellular location">
    <subcellularLocation>
        <location evidence="1">Cytoplasm</location>
    </subcellularLocation>
</comment>
<comment type="similarity">
    <text evidence="1">Belongs to the methylthiotransferase family. MiaB subfamily.</text>
</comment>
<proteinExistence type="inferred from homology"/>
<name>MIAB_METEP</name>
<evidence type="ECO:0000255" key="1">
    <source>
        <dbReference type="HAMAP-Rule" id="MF_01864"/>
    </source>
</evidence>
<evidence type="ECO:0000255" key="2">
    <source>
        <dbReference type="PROSITE-ProRule" id="PRU01266"/>
    </source>
</evidence>
<organism>
    <name type="scientific">Methylorubrum extorquens (strain PA1)</name>
    <name type="common">Methylobacterium extorquens</name>
    <dbReference type="NCBI Taxonomy" id="419610"/>
    <lineage>
        <taxon>Bacteria</taxon>
        <taxon>Pseudomonadati</taxon>
        <taxon>Pseudomonadota</taxon>
        <taxon>Alphaproteobacteria</taxon>
        <taxon>Hyphomicrobiales</taxon>
        <taxon>Methylobacteriaceae</taxon>
        <taxon>Methylorubrum</taxon>
    </lineage>
</organism>
<keyword id="KW-0004">4Fe-4S</keyword>
<keyword id="KW-0963">Cytoplasm</keyword>
<keyword id="KW-0408">Iron</keyword>
<keyword id="KW-0411">Iron-sulfur</keyword>
<keyword id="KW-0479">Metal-binding</keyword>
<keyword id="KW-0949">S-adenosyl-L-methionine</keyword>
<keyword id="KW-0808">Transferase</keyword>
<keyword id="KW-0819">tRNA processing</keyword>
<protein>
    <recommendedName>
        <fullName evidence="1">tRNA-2-methylthio-N(6)-dimethylallyladenosine synthase</fullName>
        <ecNumber evidence="1">2.8.4.3</ecNumber>
    </recommendedName>
    <alternativeName>
        <fullName evidence="1">(Dimethylallyl)adenosine tRNA methylthiotransferase MiaB</fullName>
    </alternativeName>
    <alternativeName>
        <fullName evidence="1">tRNA-i(6)A37 methylthiotransferase</fullName>
    </alternativeName>
</protein>
<feature type="chain" id="PRO_0000374377" description="tRNA-2-methylthio-N(6)-dimethylallyladenosine synthase">
    <location>
        <begin position="1"/>
        <end position="446"/>
    </location>
</feature>
<feature type="domain" description="MTTase N-terminal" evidence="1">
    <location>
        <begin position="2"/>
        <end position="122"/>
    </location>
</feature>
<feature type="domain" description="Radical SAM core" evidence="2">
    <location>
        <begin position="143"/>
        <end position="375"/>
    </location>
</feature>
<feature type="domain" description="TRAM" evidence="1">
    <location>
        <begin position="378"/>
        <end position="440"/>
    </location>
</feature>
<feature type="binding site" evidence="1">
    <location>
        <position position="11"/>
    </location>
    <ligand>
        <name>[4Fe-4S] cluster</name>
        <dbReference type="ChEBI" id="CHEBI:49883"/>
        <label>1</label>
    </ligand>
</feature>
<feature type="binding site" evidence="1">
    <location>
        <position position="47"/>
    </location>
    <ligand>
        <name>[4Fe-4S] cluster</name>
        <dbReference type="ChEBI" id="CHEBI:49883"/>
        <label>1</label>
    </ligand>
</feature>
<feature type="binding site" evidence="1">
    <location>
        <position position="85"/>
    </location>
    <ligand>
        <name>[4Fe-4S] cluster</name>
        <dbReference type="ChEBI" id="CHEBI:49883"/>
        <label>1</label>
    </ligand>
</feature>
<feature type="binding site" evidence="1">
    <location>
        <position position="157"/>
    </location>
    <ligand>
        <name>[4Fe-4S] cluster</name>
        <dbReference type="ChEBI" id="CHEBI:49883"/>
        <label>2</label>
        <note>4Fe-4S-S-AdoMet</note>
    </ligand>
</feature>
<feature type="binding site" evidence="1">
    <location>
        <position position="161"/>
    </location>
    <ligand>
        <name>[4Fe-4S] cluster</name>
        <dbReference type="ChEBI" id="CHEBI:49883"/>
        <label>2</label>
        <note>4Fe-4S-S-AdoMet</note>
    </ligand>
</feature>
<feature type="binding site" evidence="1">
    <location>
        <position position="164"/>
    </location>
    <ligand>
        <name>[4Fe-4S] cluster</name>
        <dbReference type="ChEBI" id="CHEBI:49883"/>
        <label>2</label>
        <note>4Fe-4S-S-AdoMet</note>
    </ligand>
</feature>
<reference key="1">
    <citation type="submission" date="2007-12" db="EMBL/GenBank/DDBJ databases">
        <title>Complete sequence of Methylobacterium extorquens PA1.</title>
        <authorList>
            <consortium name="US DOE Joint Genome Institute"/>
            <person name="Copeland A."/>
            <person name="Lucas S."/>
            <person name="Lapidus A."/>
            <person name="Barry K."/>
            <person name="Glavina del Rio T."/>
            <person name="Dalin E."/>
            <person name="Tice H."/>
            <person name="Pitluck S."/>
            <person name="Saunders E."/>
            <person name="Brettin T."/>
            <person name="Bruce D."/>
            <person name="Detter J.C."/>
            <person name="Han C."/>
            <person name="Schmutz J."/>
            <person name="Larimer F."/>
            <person name="Land M."/>
            <person name="Hauser L."/>
            <person name="Kyrpides N."/>
            <person name="Kim E."/>
            <person name="Marx C."/>
            <person name="Richardson P."/>
        </authorList>
    </citation>
    <scope>NUCLEOTIDE SEQUENCE [LARGE SCALE GENOMIC DNA]</scope>
    <source>
        <strain>PA1</strain>
    </source>
</reference>